<organism>
    <name type="scientific">Malus domestica</name>
    <name type="common">Apple</name>
    <name type="synonym">Pyrus malus</name>
    <dbReference type="NCBI Taxonomy" id="3750"/>
    <lineage>
        <taxon>Eukaryota</taxon>
        <taxon>Viridiplantae</taxon>
        <taxon>Streptophyta</taxon>
        <taxon>Embryophyta</taxon>
        <taxon>Tracheophyta</taxon>
        <taxon>Spermatophyta</taxon>
        <taxon>Magnoliopsida</taxon>
        <taxon>eudicotyledons</taxon>
        <taxon>Gunneridae</taxon>
        <taxon>Pentapetalae</taxon>
        <taxon>rosids</taxon>
        <taxon>fabids</taxon>
        <taxon>Rosales</taxon>
        <taxon>Rosaceae</taxon>
        <taxon>Amygdaloideae</taxon>
        <taxon>Maleae</taxon>
        <taxon>Malus</taxon>
    </lineage>
</organism>
<name>BGAL_MALDO</name>
<keyword id="KW-0052">Apoplast</keyword>
<keyword id="KW-0903">Direct protein sequencing</keyword>
<keyword id="KW-0325">Glycoprotein</keyword>
<keyword id="KW-0326">Glycosidase</keyword>
<keyword id="KW-0378">Hydrolase</keyword>
<keyword id="KW-0964">Secreted</keyword>
<keyword id="KW-0732">Signal</keyword>
<evidence type="ECO:0000255" key="1"/>
<evidence type="ECO:0000305" key="2"/>
<reference key="1">
    <citation type="journal article" date="1994" name="Plant Physiol.">
        <title>Apple beta-galactosidase. Activity against cell wall polysaccharides and characterization of a related cDNA clone.</title>
        <authorList>
            <person name="Ross G.S."/>
            <person name="Wegrzyn T."/>
            <person name="Macrae E.A."/>
            <person name="Redgwell R.J."/>
        </authorList>
    </citation>
    <scope>NUCLEOTIDE SEQUENCE [MRNA]</scope>
    <scope>PARTIAL PROTEIN SEQUENCE</scope>
    <source>
        <strain>cv. Granny Smith</strain>
        <tissue>Fruit cortical tissue</tissue>
    </source>
</reference>
<dbReference type="EC" id="3.2.1.23"/>
<dbReference type="EMBL" id="L29451">
    <property type="protein sequence ID" value="AAA62324.1"/>
    <property type="molecule type" value="mRNA"/>
</dbReference>
<dbReference type="PIR" id="T17002">
    <property type="entry name" value="T17002"/>
</dbReference>
<dbReference type="SMR" id="P48981"/>
<dbReference type="CAZy" id="GH35">
    <property type="family name" value="Glycoside Hydrolase Family 35"/>
</dbReference>
<dbReference type="GO" id="GO:0048046">
    <property type="term" value="C:apoplast"/>
    <property type="evidence" value="ECO:0007669"/>
    <property type="project" value="UniProtKB-SubCell"/>
</dbReference>
<dbReference type="GO" id="GO:0004565">
    <property type="term" value="F:beta-galactosidase activity"/>
    <property type="evidence" value="ECO:0007669"/>
    <property type="project" value="UniProtKB-EC"/>
</dbReference>
<dbReference type="GO" id="GO:0005975">
    <property type="term" value="P:carbohydrate metabolic process"/>
    <property type="evidence" value="ECO:0007669"/>
    <property type="project" value="InterPro"/>
</dbReference>
<dbReference type="FunFam" id="2.60.120.260:FF:000061">
    <property type="entry name" value="Beta-galactosidase"/>
    <property type="match status" value="1"/>
</dbReference>
<dbReference type="FunFam" id="2.60.120.260:FF:000076">
    <property type="entry name" value="Beta-galactosidase"/>
    <property type="match status" value="1"/>
</dbReference>
<dbReference type="FunFam" id="2.60.120.260:FF:000142">
    <property type="entry name" value="Beta-galactosidase"/>
    <property type="match status" value="1"/>
</dbReference>
<dbReference type="FunFam" id="3.20.20.80:FF:000021">
    <property type="entry name" value="Beta-galactosidase"/>
    <property type="match status" value="1"/>
</dbReference>
<dbReference type="Gene3D" id="2.60.120.260">
    <property type="entry name" value="Galactose-binding domain-like"/>
    <property type="match status" value="2"/>
</dbReference>
<dbReference type="Gene3D" id="3.20.20.80">
    <property type="entry name" value="Glycosidases"/>
    <property type="match status" value="1"/>
</dbReference>
<dbReference type="InterPro" id="IPR048913">
    <property type="entry name" value="BetaGal_gal-bd"/>
</dbReference>
<dbReference type="InterPro" id="IPR008979">
    <property type="entry name" value="Galactose-bd-like_sf"/>
</dbReference>
<dbReference type="InterPro" id="IPR041392">
    <property type="entry name" value="GHD"/>
</dbReference>
<dbReference type="InterPro" id="IPR031330">
    <property type="entry name" value="Gly_Hdrlase_35_cat"/>
</dbReference>
<dbReference type="InterPro" id="IPR019801">
    <property type="entry name" value="Glyco_hydro_35_CS"/>
</dbReference>
<dbReference type="InterPro" id="IPR001944">
    <property type="entry name" value="Glycoside_Hdrlase_35"/>
</dbReference>
<dbReference type="InterPro" id="IPR017853">
    <property type="entry name" value="Glycoside_hydrolase_SF"/>
</dbReference>
<dbReference type="PANTHER" id="PTHR23421">
    <property type="entry name" value="BETA-GALACTOSIDASE RELATED"/>
    <property type="match status" value="1"/>
</dbReference>
<dbReference type="Pfam" id="PF21467">
    <property type="entry name" value="BetaGal_gal-bd"/>
    <property type="match status" value="2"/>
</dbReference>
<dbReference type="Pfam" id="PF17834">
    <property type="entry name" value="GHD"/>
    <property type="match status" value="1"/>
</dbReference>
<dbReference type="Pfam" id="PF01301">
    <property type="entry name" value="Glyco_hydro_35"/>
    <property type="match status" value="1"/>
</dbReference>
<dbReference type="PRINTS" id="PR00742">
    <property type="entry name" value="GLHYDRLASE35"/>
</dbReference>
<dbReference type="SUPFAM" id="SSF51445">
    <property type="entry name" value="(Trans)glycosidases"/>
    <property type="match status" value="1"/>
</dbReference>
<dbReference type="SUPFAM" id="SSF49785">
    <property type="entry name" value="Galactose-binding domain-like"/>
    <property type="match status" value="2"/>
</dbReference>
<dbReference type="PROSITE" id="PS01182">
    <property type="entry name" value="GLYCOSYL_HYDROL_F35"/>
    <property type="match status" value="1"/>
</dbReference>
<comment type="function">
    <text>Involved in cell wall degradation. Degrades polysaccharides containing beta-(1--&gt;4)-linked galactans, acting as an exo-(1--&gt;4)-beta-D-galactanase.</text>
</comment>
<comment type="catalytic activity">
    <reaction>
        <text>Hydrolysis of terminal non-reducing beta-D-galactose residues in beta-D-galactosides.</text>
        <dbReference type="EC" id="3.2.1.23"/>
    </reaction>
</comment>
<comment type="subcellular location">
    <subcellularLocation>
        <location evidence="2">Secreted</location>
        <location evidence="2">Extracellular space</location>
        <location evidence="2">Apoplast</location>
    </subcellularLocation>
</comment>
<comment type="similarity">
    <text evidence="2">Belongs to the glycosyl hydrolase 35 family.</text>
</comment>
<protein>
    <recommendedName>
        <fullName>Beta-galactosidase</fullName>
        <ecNumber>3.2.1.23</ecNumber>
    </recommendedName>
    <alternativeName>
        <fullName>Acid beta-galactosidase</fullName>
        <shortName>Lactase</shortName>
    </alternativeName>
    <alternativeName>
        <fullName>Exo-(1--&gt;4)-beta-D-galactanase</fullName>
    </alternativeName>
</protein>
<accession>P48981</accession>
<feature type="signal peptide" evidence="1">
    <location>
        <begin position="1"/>
        <end position="23"/>
    </location>
</feature>
<feature type="chain" id="PRO_0000012197" description="Beta-galactosidase">
    <location>
        <begin position="24"/>
        <end position="731"/>
    </location>
</feature>
<feature type="active site" description="Proton donor" evidence="1">
    <location>
        <position position="182"/>
    </location>
</feature>
<feature type="active site" description="Nucleophile" evidence="1">
    <location>
        <position position="251"/>
    </location>
</feature>
<feature type="glycosylation site" description="N-linked (GlcNAc...) asparagine" evidence="1">
    <location>
        <position position="459"/>
    </location>
</feature>
<sequence length="731" mass="80996">MGVGIQTMWSILLLFSCIFSAASASVSYDHKAIIINGQKRILISGSIHYPRSTPEMWPDLIQKAKDGGLDVIQTYVFWNGHEPSPGNYYFEERYDLVKFIKLVQQEGLFVNLRIGPYVCAEWNFGGFPVWLKYVPGIAFRTDNEPFKAAMQKFTEKIVSMMKAEKLFQTQGGPIILSQIENEFGPVEWEIGAPGKAYTKWAAQMAVGLDTGVPWIMCKQEDAPDPVIDTCNGFYCENFKPNKDYKPKMWTEVWTGWYTEFGGAVPTRPAEDVAFSVARFIQSGGSFLNYYMYHGGTNFGRTAGGPFMATSYDYDAPLDEYGLPREPKWGHLRDLHKAIKSCESALVSVDPSVTKLGSNQEAHVFKSESDCAAFLANYDAKYSVKVSFGGGQYDLPPWSISILPDCKTEVYNTAKVGSQSSQVQMTPVHSGFPWQSFIEETTSSDETDTTTLDGLYEQINITRDTTDYLWYMTDITIGSDEAFLKNGKSPLLTIFSAGHALNVFINGQLSGTVYGSLENPKLSFSQNVNLRSGINKLALLSISVGLPNVGTHFETWNAGVLGPITLKGLNSGTWDMSGWKWTYKTGLKGEALGLHTVTGSSSVEWVEGPSMAEKQPLTWYKATFNAPPGDAPLALDMGSMGKGQIWINGQSVGRHWPGYIARGSCGDCSYAGTYDDKKCRTHCGEPSQRWYHIPRSWLTPTGNLLVVFEEWGGDPSRISLVERGTALDAKKL</sequence>
<proteinExistence type="evidence at protein level"/>